<sequence length="8" mass="866">CSTCLDKP</sequence>
<organism>
    <name type="scientific">Tityus obscurus</name>
    <name type="common">Amazonian scorpion</name>
    <name type="synonym">Tityus cambridgei</name>
    <dbReference type="NCBI Taxonomy" id="1221240"/>
    <lineage>
        <taxon>Eukaryota</taxon>
        <taxon>Metazoa</taxon>
        <taxon>Ecdysozoa</taxon>
        <taxon>Arthropoda</taxon>
        <taxon>Chelicerata</taxon>
        <taxon>Arachnida</taxon>
        <taxon>Scorpiones</taxon>
        <taxon>Buthida</taxon>
        <taxon>Buthoidea</taxon>
        <taxon>Buthidae</taxon>
        <taxon>Tityus</taxon>
    </lineage>
</organism>
<dbReference type="GO" id="GO:0005576">
    <property type="term" value="C:extracellular region"/>
    <property type="evidence" value="ECO:0007005"/>
    <property type="project" value="UniProtKB"/>
</dbReference>
<dbReference type="GO" id="GO:0090729">
    <property type="term" value="F:toxin activity"/>
    <property type="evidence" value="ECO:0007669"/>
    <property type="project" value="UniProtKB-KW"/>
</dbReference>
<evidence type="ECO:0000269" key="1">
    <source>
    </source>
</evidence>
<evidence type="ECO:0000303" key="2">
    <source>
    </source>
</evidence>
<evidence type="ECO:0000305" key="3"/>
<keyword id="KW-0903">Direct protein sequencing</keyword>
<keyword id="KW-0964">Secreted</keyword>
<keyword id="KW-0800">Toxin</keyword>
<reference evidence="3" key="1">
    <citation type="journal article" date="2004" name="J. Chromatogr. B">
        <title>Proteomics of the venom from the Amazonian scorpion Tityus cambridgei and the role of prolines on mass spectrometry analysis of toxins.</title>
        <authorList>
            <person name="Batista C.V.F."/>
            <person name="del Pozo L."/>
            <person name="Zamudio F.Z."/>
            <person name="Contreras S."/>
            <person name="Becerril B."/>
            <person name="Wanke E."/>
            <person name="Possani L.D."/>
        </authorList>
    </citation>
    <scope>PROTEIN SEQUENCE</scope>
    <scope>SUBCELLULAR LOCATION</scope>
    <scope>TISSUE SPECIFICITY</scope>
    <scope>MASS SPECTROMETRY</scope>
    <source>
        <tissue evidence="1">Venom</tissue>
    </source>
</reference>
<name>SC31_TITOB</name>
<accession>P84678</accession>
<proteinExistence type="evidence at protein level"/>
<protein>
    <recommendedName>
        <fullName>Toxin To31</fullName>
    </recommendedName>
    <alternativeName>
        <fullName>Toxin Tc31</fullName>
    </alternativeName>
</protein>
<feature type="chain" id="PRO_0000066800" description="Toxin To31">
    <location>
        <begin position="1"/>
        <end position="8" status="greater than"/>
    </location>
</feature>
<feature type="non-terminal residue" evidence="2">
    <location>
        <position position="8"/>
    </location>
</feature>
<comment type="subcellular location">
    <subcellularLocation>
        <location evidence="1">Secreted</location>
    </subcellularLocation>
</comment>
<comment type="tissue specificity">
    <text evidence="1">Expressed by the venom gland.</text>
</comment>
<comment type="mass spectrometry" mass="4304.4" method="Electrospray" evidence="1"/>